<comment type="function">
    <text evidence="1">Catalyzes the NADPH-dependent reduction of glutamyl-tRNA(Glu) to glutamate 1-semialdehyde (GSA).</text>
</comment>
<comment type="catalytic activity">
    <reaction evidence="1">
        <text>(S)-4-amino-5-oxopentanoate + tRNA(Glu) + NADP(+) = L-glutamyl-tRNA(Glu) + NADPH + H(+)</text>
        <dbReference type="Rhea" id="RHEA:12344"/>
        <dbReference type="Rhea" id="RHEA-COMP:9663"/>
        <dbReference type="Rhea" id="RHEA-COMP:9680"/>
        <dbReference type="ChEBI" id="CHEBI:15378"/>
        <dbReference type="ChEBI" id="CHEBI:57501"/>
        <dbReference type="ChEBI" id="CHEBI:57783"/>
        <dbReference type="ChEBI" id="CHEBI:58349"/>
        <dbReference type="ChEBI" id="CHEBI:78442"/>
        <dbReference type="ChEBI" id="CHEBI:78520"/>
        <dbReference type="EC" id="1.2.1.70"/>
    </reaction>
</comment>
<comment type="pathway">
    <text evidence="1">Porphyrin-containing compound metabolism; protoporphyrin-IX biosynthesis; 5-aminolevulinate from L-glutamyl-tRNA(Glu): step 1/2.</text>
</comment>
<comment type="subunit">
    <text evidence="1">Homodimer.</text>
</comment>
<comment type="domain">
    <text evidence="1">Possesses an unusual extended V-shaped dimeric structure with each monomer consisting of three distinct domains arranged along a curved 'spinal' alpha-helix. The N-terminal catalytic domain specifically recognizes the glutamate moiety of the substrate. The second domain is the NADPH-binding domain, and the third C-terminal domain is responsible for dimerization.</text>
</comment>
<comment type="miscellaneous">
    <text evidence="1">During catalysis, the active site Cys acts as a nucleophile attacking the alpha-carbonyl group of tRNA-bound glutamate with the formation of a thioester intermediate between enzyme and glutamate, and the concomitant release of tRNA(Glu). The thioester intermediate is finally reduced by direct hydride transfer from NADPH, to form the product GSA.</text>
</comment>
<comment type="similarity">
    <text evidence="1">Belongs to the glutamyl-tRNA reductase family.</text>
</comment>
<gene>
    <name evidence="1" type="primary">hemA</name>
    <name type="ordered locus">Ccon26_08200</name>
    <name type="ORF">CCC13826_1051</name>
</gene>
<proteinExistence type="inferred from homology"/>
<evidence type="ECO:0000255" key="1">
    <source>
        <dbReference type="HAMAP-Rule" id="MF_00087"/>
    </source>
</evidence>
<name>HEM1_CAMC1</name>
<keyword id="KW-0521">NADP</keyword>
<keyword id="KW-0560">Oxidoreductase</keyword>
<keyword id="KW-0627">Porphyrin biosynthesis</keyword>
<organism>
    <name type="scientific">Campylobacter concisus (strain 13826)</name>
    <dbReference type="NCBI Taxonomy" id="360104"/>
    <lineage>
        <taxon>Bacteria</taxon>
        <taxon>Pseudomonadati</taxon>
        <taxon>Campylobacterota</taxon>
        <taxon>Epsilonproteobacteria</taxon>
        <taxon>Campylobacterales</taxon>
        <taxon>Campylobacteraceae</taxon>
        <taxon>Campylobacter</taxon>
    </lineage>
</organism>
<reference key="1">
    <citation type="submission" date="2007-10" db="EMBL/GenBank/DDBJ databases">
        <title>Genome sequence of Campylobacter concisus 13826 isolated from human feces.</title>
        <authorList>
            <person name="Fouts D.E."/>
            <person name="Mongodin E.F."/>
            <person name="Puiu D."/>
            <person name="Sebastian Y."/>
            <person name="Miller W.G."/>
            <person name="Mandrell R.E."/>
            <person name="On S."/>
            <person name="Nelson K.E."/>
        </authorList>
    </citation>
    <scope>NUCLEOTIDE SEQUENCE [LARGE SCALE GENOMIC DNA]</scope>
    <source>
        <strain>13826</strain>
    </source>
</reference>
<feature type="chain" id="PRO_1000071246" description="Glutamyl-tRNA reductase">
    <location>
        <begin position="1"/>
        <end position="427"/>
    </location>
</feature>
<feature type="active site" description="Nucleophile" evidence="1">
    <location>
        <position position="51"/>
    </location>
</feature>
<feature type="binding site" evidence="1">
    <location>
        <begin position="50"/>
        <end position="53"/>
    </location>
    <ligand>
        <name>substrate</name>
    </ligand>
</feature>
<feature type="binding site" evidence="1">
    <location>
        <position position="110"/>
    </location>
    <ligand>
        <name>substrate</name>
    </ligand>
</feature>
<feature type="binding site" evidence="1">
    <location>
        <begin position="115"/>
        <end position="117"/>
    </location>
    <ligand>
        <name>substrate</name>
    </ligand>
</feature>
<feature type="binding site" evidence="1">
    <location>
        <position position="121"/>
    </location>
    <ligand>
        <name>substrate</name>
    </ligand>
</feature>
<feature type="binding site" evidence="1">
    <location>
        <begin position="190"/>
        <end position="195"/>
    </location>
    <ligand>
        <name>NADP(+)</name>
        <dbReference type="ChEBI" id="CHEBI:58349"/>
    </ligand>
</feature>
<feature type="site" description="Important for activity" evidence="1">
    <location>
        <position position="100"/>
    </location>
</feature>
<dbReference type="EC" id="1.2.1.70" evidence="1"/>
<dbReference type="EMBL" id="CP000792">
    <property type="protein sequence ID" value="EAT97817.1"/>
    <property type="molecule type" value="Genomic_DNA"/>
</dbReference>
<dbReference type="RefSeq" id="WP_012001638.1">
    <property type="nucleotide sequence ID" value="NC_009802.2"/>
</dbReference>
<dbReference type="SMR" id="A7ZD34"/>
<dbReference type="STRING" id="360104.CCC13826_1051"/>
<dbReference type="KEGG" id="cco:CCC13826_1051"/>
<dbReference type="eggNOG" id="COG0373">
    <property type="taxonomic scope" value="Bacteria"/>
</dbReference>
<dbReference type="HOGENOM" id="CLU_035113_2_2_7"/>
<dbReference type="OrthoDB" id="110209at2"/>
<dbReference type="UniPathway" id="UPA00251">
    <property type="reaction ID" value="UER00316"/>
</dbReference>
<dbReference type="Proteomes" id="UP000001121">
    <property type="component" value="Chromosome"/>
</dbReference>
<dbReference type="GO" id="GO:0008883">
    <property type="term" value="F:glutamyl-tRNA reductase activity"/>
    <property type="evidence" value="ECO:0007669"/>
    <property type="project" value="UniProtKB-UniRule"/>
</dbReference>
<dbReference type="GO" id="GO:0050661">
    <property type="term" value="F:NADP binding"/>
    <property type="evidence" value="ECO:0007669"/>
    <property type="project" value="InterPro"/>
</dbReference>
<dbReference type="GO" id="GO:0019353">
    <property type="term" value="P:protoporphyrinogen IX biosynthetic process from glutamate"/>
    <property type="evidence" value="ECO:0007669"/>
    <property type="project" value="TreeGrafter"/>
</dbReference>
<dbReference type="CDD" id="cd05213">
    <property type="entry name" value="NAD_bind_Glutamyl_tRNA_reduct"/>
    <property type="match status" value="1"/>
</dbReference>
<dbReference type="FunFam" id="3.30.460.30:FF:000001">
    <property type="entry name" value="Glutamyl-tRNA reductase"/>
    <property type="match status" value="1"/>
</dbReference>
<dbReference type="Gene3D" id="3.30.460.30">
    <property type="entry name" value="Glutamyl-tRNA reductase, N-terminal domain"/>
    <property type="match status" value="1"/>
</dbReference>
<dbReference type="Gene3D" id="3.40.50.720">
    <property type="entry name" value="NAD(P)-binding Rossmann-like Domain"/>
    <property type="match status" value="1"/>
</dbReference>
<dbReference type="HAMAP" id="MF_00087">
    <property type="entry name" value="Glu_tRNA_reductase"/>
    <property type="match status" value="1"/>
</dbReference>
<dbReference type="InterPro" id="IPR000343">
    <property type="entry name" value="4pyrrol_synth_GluRdtase"/>
</dbReference>
<dbReference type="InterPro" id="IPR015896">
    <property type="entry name" value="4pyrrol_synth_GluRdtase_dimer"/>
</dbReference>
<dbReference type="InterPro" id="IPR015895">
    <property type="entry name" value="4pyrrol_synth_GluRdtase_N"/>
</dbReference>
<dbReference type="InterPro" id="IPR018214">
    <property type="entry name" value="GluRdtase_CS"/>
</dbReference>
<dbReference type="InterPro" id="IPR036453">
    <property type="entry name" value="GluRdtase_dimer_dom_sf"/>
</dbReference>
<dbReference type="InterPro" id="IPR036343">
    <property type="entry name" value="GluRdtase_N_sf"/>
</dbReference>
<dbReference type="InterPro" id="IPR036291">
    <property type="entry name" value="NAD(P)-bd_dom_sf"/>
</dbReference>
<dbReference type="InterPro" id="IPR006151">
    <property type="entry name" value="Shikm_DH/Glu-tRNA_Rdtase"/>
</dbReference>
<dbReference type="NCBIfam" id="TIGR01035">
    <property type="entry name" value="hemA"/>
    <property type="match status" value="1"/>
</dbReference>
<dbReference type="PANTHER" id="PTHR43013">
    <property type="entry name" value="GLUTAMYL-TRNA REDUCTASE"/>
    <property type="match status" value="1"/>
</dbReference>
<dbReference type="PANTHER" id="PTHR43013:SF1">
    <property type="entry name" value="GLUTAMYL-TRNA REDUCTASE"/>
    <property type="match status" value="1"/>
</dbReference>
<dbReference type="Pfam" id="PF00745">
    <property type="entry name" value="GlutR_dimer"/>
    <property type="match status" value="1"/>
</dbReference>
<dbReference type="Pfam" id="PF05201">
    <property type="entry name" value="GlutR_N"/>
    <property type="match status" value="1"/>
</dbReference>
<dbReference type="Pfam" id="PF01488">
    <property type="entry name" value="Shikimate_DH"/>
    <property type="match status" value="1"/>
</dbReference>
<dbReference type="PIRSF" id="PIRSF000445">
    <property type="entry name" value="4pyrrol_synth_GluRdtase"/>
    <property type="match status" value="1"/>
</dbReference>
<dbReference type="SUPFAM" id="SSF69742">
    <property type="entry name" value="Glutamyl tRNA-reductase catalytic, N-terminal domain"/>
    <property type="match status" value="1"/>
</dbReference>
<dbReference type="SUPFAM" id="SSF69075">
    <property type="entry name" value="Glutamyl tRNA-reductase dimerization domain"/>
    <property type="match status" value="1"/>
</dbReference>
<dbReference type="SUPFAM" id="SSF51735">
    <property type="entry name" value="NAD(P)-binding Rossmann-fold domains"/>
    <property type="match status" value="1"/>
</dbReference>
<dbReference type="PROSITE" id="PS00747">
    <property type="entry name" value="GLUTR"/>
    <property type="match status" value="1"/>
</dbReference>
<accession>A7ZD34</accession>
<protein>
    <recommendedName>
        <fullName evidence="1">Glutamyl-tRNA reductase</fullName>
        <shortName evidence="1">GluTR</shortName>
        <ecNumber evidence="1">1.2.1.70</ecNumber>
    </recommendedName>
</protein>
<sequence>MHYLDISFTYKNTDISVREKLAFDSDEKKEQILKLINSNKNIKESMVLNTCNRVEIIASVEDVKAATAHIIRCMSIFSGVFEDELYERADIYENSGAAHHLFAVASSLDSLVVGETQIVGQLKNAFKFAYDNNSCGEDISKIIHYACKCAAKVRNETQISKNPISVSSVAVAKAKEIFGTLEGKTAIVVGAGEMGELAAKHLISSGAEVIIINRSSERVEQLVDSLGDNASWDSILKLKEYVNNYDLIFSSTAAPHAIITGEIIEPREFHRYFFDIAVPRDIDLLNTELISVYTVDSLEEIVRKNLALREEQAQKAYSIVGQDTSEFLKTLKEDMSVPLIKSIRKQAEICAKNELEKAIKKGYLKHSDYDEAQKLIHQVFKAFLHQPTMKLKGLADEERASELSNGVKFLFDIKDEQNFQAGDIDEI</sequence>